<proteinExistence type="evidence at transcript level"/>
<sequence length="244" mass="27405">MEMAAPVSPAPRTVEDIFKDFSGRRAGLVRALTVDVDEFYGFCDPEKENLCLYGHPNGRWEVALPAEEVPPELPEPALGINFARDGMHRRDWLSLVAVHSDSWLLSVAFFFGARLNGNERKRLFSLINDHPTVLEALSDRKHGRDNKSGADNGSKSRHSGKRANDVQTKTSRPAVVDDGYDEEEHSETLCGTCGGRYNANEFWIGCDICERWFHGKCVRITPAKAEHIKHYKCPDCSSSKKSRQ</sequence>
<feature type="chain" id="PRO_0000412939" description="PHD finger protein ALFIN-LIKE 2">
    <location>
        <begin position="1"/>
        <end position="244"/>
    </location>
</feature>
<feature type="zinc finger region" description="PHD-type" evidence="2">
    <location>
        <begin position="187"/>
        <end position="239"/>
    </location>
</feature>
<feature type="region of interest" description="Disordered" evidence="3">
    <location>
        <begin position="137"/>
        <end position="178"/>
    </location>
</feature>
<feature type="compositionally biased region" description="Basic and acidic residues" evidence="3">
    <location>
        <begin position="137"/>
        <end position="148"/>
    </location>
</feature>
<feature type="site" description="Histone H3K4me3 binding" evidence="1">
    <location>
        <position position="197"/>
    </location>
</feature>
<feature type="site" description="Histone H3K4me3 binding" evidence="1">
    <location>
        <position position="203"/>
    </location>
</feature>
<feature type="site" description="Histone H3K4me3 binding" evidence="1">
    <location>
        <position position="207"/>
    </location>
</feature>
<feature type="site" description="Histone H3K4me3 binding" evidence="1">
    <location>
        <position position="212"/>
    </location>
</feature>
<feature type="sequence conflict" description="In Ref. 4; EAZ39202." evidence="4" ref="4">
    <original>SPAPR</original>
    <variation>FPAPG</variation>
    <location>
        <begin position="8"/>
        <end position="12"/>
    </location>
</feature>
<feature type="sequence conflict" description="In Ref. 5; BAG93565." evidence="4" ref="5">
    <original>P</original>
    <variation>R</variation>
    <location>
        <position position="56"/>
    </location>
</feature>
<protein>
    <recommendedName>
        <fullName>PHD finger protein ALFIN-LIKE 2</fullName>
    </recommendedName>
</protein>
<reference key="1">
    <citation type="journal article" date="2005" name="Nature">
        <title>The map-based sequence of the rice genome.</title>
        <authorList>
            <consortium name="International rice genome sequencing project (IRGSP)"/>
        </authorList>
    </citation>
    <scope>NUCLEOTIDE SEQUENCE [LARGE SCALE GENOMIC DNA]</scope>
    <source>
        <strain>cv. Nipponbare</strain>
    </source>
</reference>
<reference key="2">
    <citation type="journal article" date="2008" name="Nucleic Acids Res.">
        <title>The rice annotation project database (RAP-DB): 2008 update.</title>
        <authorList>
            <consortium name="The rice annotation project (RAP)"/>
        </authorList>
    </citation>
    <scope>GENOME REANNOTATION</scope>
    <source>
        <strain>cv. Nipponbare</strain>
    </source>
</reference>
<reference key="3">
    <citation type="journal article" date="2013" name="Rice">
        <title>Improvement of the Oryza sativa Nipponbare reference genome using next generation sequence and optical map data.</title>
        <authorList>
            <person name="Kawahara Y."/>
            <person name="de la Bastide M."/>
            <person name="Hamilton J.P."/>
            <person name="Kanamori H."/>
            <person name="McCombie W.R."/>
            <person name="Ouyang S."/>
            <person name="Schwartz D.C."/>
            <person name="Tanaka T."/>
            <person name="Wu J."/>
            <person name="Zhou S."/>
            <person name="Childs K.L."/>
            <person name="Davidson R.M."/>
            <person name="Lin H."/>
            <person name="Quesada-Ocampo L."/>
            <person name="Vaillancourt B."/>
            <person name="Sakai H."/>
            <person name="Lee S.S."/>
            <person name="Kim J."/>
            <person name="Numa H."/>
            <person name="Itoh T."/>
            <person name="Buell C.R."/>
            <person name="Matsumoto T."/>
        </authorList>
    </citation>
    <scope>GENOME REANNOTATION</scope>
    <source>
        <strain>cv. Nipponbare</strain>
    </source>
</reference>
<reference key="4">
    <citation type="journal article" date="2005" name="PLoS Biol.">
        <title>The genomes of Oryza sativa: a history of duplications.</title>
        <authorList>
            <person name="Yu J."/>
            <person name="Wang J."/>
            <person name="Lin W."/>
            <person name="Li S."/>
            <person name="Li H."/>
            <person name="Zhou J."/>
            <person name="Ni P."/>
            <person name="Dong W."/>
            <person name="Hu S."/>
            <person name="Zeng C."/>
            <person name="Zhang J."/>
            <person name="Zhang Y."/>
            <person name="Li R."/>
            <person name="Xu Z."/>
            <person name="Li S."/>
            <person name="Li X."/>
            <person name="Zheng H."/>
            <person name="Cong L."/>
            <person name="Lin L."/>
            <person name="Yin J."/>
            <person name="Geng J."/>
            <person name="Li G."/>
            <person name="Shi J."/>
            <person name="Liu J."/>
            <person name="Lv H."/>
            <person name="Li J."/>
            <person name="Wang J."/>
            <person name="Deng Y."/>
            <person name="Ran L."/>
            <person name="Shi X."/>
            <person name="Wang X."/>
            <person name="Wu Q."/>
            <person name="Li C."/>
            <person name="Ren X."/>
            <person name="Wang J."/>
            <person name="Wang X."/>
            <person name="Li D."/>
            <person name="Liu D."/>
            <person name="Zhang X."/>
            <person name="Ji Z."/>
            <person name="Zhao W."/>
            <person name="Sun Y."/>
            <person name="Zhang Z."/>
            <person name="Bao J."/>
            <person name="Han Y."/>
            <person name="Dong L."/>
            <person name="Ji J."/>
            <person name="Chen P."/>
            <person name="Wu S."/>
            <person name="Liu J."/>
            <person name="Xiao Y."/>
            <person name="Bu D."/>
            <person name="Tan J."/>
            <person name="Yang L."/>
            <person name="Ye C."/>
            <person name="Zhang J."/>
            <person name="Xu J."/>
            <person name="Zhou Y."/>
            <person name="Yu Y."/>
            <person name="Zhang B."/>
            <person name="Zhuang S."/>
            <person name="Wei H."/>
            <person name="Liu B."/>
            <person name="Lei M."/>
            <person name="Yu H."/>
            <person name="Li Y."/>
            <person name="Xu H."/>
            <person name="Wei S."/>
            <person name="He X."/>
            <person name="Fang L."/>
            <person name="Zhang Z."/>
            <person name="Zhang Y."/>
            <person name="Huang X."/>
            <person name="Su Z."/>
            <person name="Tong W."/>
            <person name="Li J."/>
            <person name="Tong Z."/>
            <person name="Li S."/>
            <person name="Ye J."/>
            <person name="Wang L."/>
            <person name="Fang L."/>
            <person name="Lei T."/>
            <person name="Chen C.-S."/>
            <person name="Chen H.-C."/>
            <person name="Xu Z."/>
            <person name="Li H."/>
            <person name="Huang H."/>
            <person name="Zhang F."/>
            <person name="Xu H."/>
            <person name="Li N."/>
            <person name="Zhao C."/>
            <person name="Li S."/>
            <person name="Dong L."/>
            <person name="Huang Y."/>
            <person name="Li L."/>
            <person name="Xi Y."/>
            <person name="Qi Q."/>
            <person name="Li W."/>
            <person name="Zhang B."/>
            <person name="Hu W."/>
            <person name="Zhang Y."/>
            <person name="Tian X."/>
            <person name="Jiao Y."/>
            <person name="Liang X."/>
            <person name="Jin J."/>
            <person name="Gao L."/>
            <person name="Zheng W."/>
            <person name="Hao B."/>
            <person name="Liu S.-M."/>
            <person name="Wang W."/>
            <person name="Yuan L."/>
            <person name="Cao M."/>
            <person name="McDermott J."/>
            <person name="Samudrala R."/>
            <person name="Wang J."/>
            <person name="Wong G.K.-S."/>
            <person name="Yang H."/>
        </authorList>
    </citation>
    <scope>NUCLEOTIDE SEQUENCE [LARGE SCALE GENOMIC DNA]</scope>
    <source>
        <strain>cv. Nipponbare</strain>
    </source>
</reference>
<reference key="5">
    <citation type="journal article" date="2003" name="Science">
        <title>Collection, mapping, and annotation of over 28,000 cDNA clones from japonica rice.</title>
        <authorList>
            <consortium name="The rice full-length cDNA consortium"/>
        </authorList>
    </citation>
    <scope>NUCLEOTIDE SEQUENCE [LARGE SCALE MRNA]</scope>
    <source>
        <strain>cv. Nipponbare</strain>
    </source>
</reference>
<reference key="6">
    <citation type="journal article" date="2009" name="Plant J.">
        <title>Arabidopsis ING and Alfin1-like protein families localize to the nucleus and bind to H3K4me3/2 via plant homeodomain fingers.</title>
        <authorList>
            <person name="Lee W.Y."/>
            <person name="Lee D."/>
            <person name="Chung W.I."/>
            <person name="Kwon C.S."/>
        </authorList>
    </citation>
    <scope>GENE FAMILY</scope>
</reference>
<evidence type="ECO:0000250" key="1"/>
<evidence type="ECO:0000255" key="2">
    <source>
        <dbReference type="PROSITE-ProRule" id="PRU00146"/>
    </source>
</evidence>
<evidence type="ECO:0000256" key="3">
    <source>
        <dbReference type="SAM" id="MobiDB-lite"/>
    </source>
</evidence>
<evidence type="ECO:0000305" key="4"/>
<accession>Q8H383</accession>
<accession>A0A0P0X3Y7</accession>
<accession>A3BI13</accession>
<accession>B7EMG8</accession>
<name>ALFL2_ORYSJ</name>
<comment type="function">
    <text evidence="1">Histone-binding component that specifically recognizes H3 tails trimethylated on 'Lys-4' (H3K4me3), which mark transcription start sites of virtually all active genes.</text>
</comment>
<comment type="subunit">
    <text evidence="1">Interacts with H3K4me3 and to a lesser extent with H3K4me2.</text>
</comment>
<comment type="subcellular location">
    <subcellularLocation>
        <location evidence="1">Nucleus</location>
    </subcellularLocation>
</comment>
<comment type="domain">
    <text evidence="1">The PHD-type zinc finger mediates the binding to H3K4me3.</text>
</comment>
<comment type="similarity">
    <text evidence="4">Belongs to the Alfin family.</text>
</comment>
<comment type="sequence caution" evidence="4">
    <conflict type="erroneous initiation">
        <sequence resource="EMBL-CDS" id="BAG93565"/>
    </conflict>
    <text>Truncated N-terminus.</text>
</comment>
<gene>
    <name type="ordered locus">Os07g0233300</name>
    <name type="ordered locus">LOC_Os07g12910</name>
    <name type="ORF">OsJ_23628</name>
    <name type="ORF">OSJNBa0061L20.107-1</name>
</gene>
<dbReference type="EMBL" id="AP005246">
    <property type="protein sequence ID" value="BAC21510.1"/>
    <property type="molecule type" value="Genomic_DNA"/>
</dbReference>
<dbReference type="EMBL" id="AP008213">
    <property type="protein sequence ID" value="BAF21155.1"/>
    <property type="molecule type" value="Genomic_DNA"/>
</dbReference>
<dbReference type="EMBL" id="AP014963">
    <property type="protein sequence ID" value="BAT00728.1"/>
    <property type="molecule type" value="Genomic_DNA"/>
</dbReference>
<dbReference type="EMBL" id="CM000144">
    <property type="protein sequence ID" value="EAZ39202.1"/>
    <property type="molecule type" value="Genomic_DNA"/>
</dbReference>
<dbReference type="EMBL" id="AK073637">
    <property type="protein sequence ID" value="BAG93565.1"/>
    <property type="status" value="ALT_INIT"/>
    <property type="molecule type" value="mRNA"/>
</dbReference>
<dbReference type="RefSeq" id="XP_015647369.1">
    <property type="nucleotide sequence ID" value="XM_015791883.1"/>
</dbReference>
<dbReference type="SMR" id="Q8H383"/>
<dbReference type="FunCoup" id="Q8H383">
    <property type="interactions" value="2009"/>
</dbReference>
<dbReference type="STRING" id="39947.Q8H383"/>
<dbReference type="PaxDb" id="39947-Q8H383"/>
<dbReference type="EnsemblPlants" id="Os07t0233300-01">
    <property type="protein sequence ID" value="Os07t0233300-01"/>
    <property type="gene ID" value="Os07g0233300"/>
</dbReference>
<dbReference type="Gramene" id="Os07t0233300-01">
    <property type="protein sequence ID" value="Os07t0233300-01"/>
    <property type="gene ID" value="Os07g0233300"/>
</dbReference>
<dbReference type="KEGG" id="dosa:Os07g0233300"/>
<dbReference type="eggNOG" id="KOG1632">
    <property type="taxonomic scope" value="Eukaryota"/>
</dbReference>
<dbReference type="HOGENOM" id="CLU_058315_1_0_1"/>
<dbReference type="InParanoid" id="Q8H383"/>
<dbReference type="OMA" id="YSMCDPE"/>
<dbReference type="OrthoDB" id="436852at2759"/>
<dbReference type="Proteomes" id="UP000000763">
    <property type="component" value="Chromosome 7"/>
</dbReference>
<dbReference type="Proteomes" id="UP000007752">
    <property type="component" value="Chromosome 7"/>
</dbReference>
<dbReference type="Proteomes" id="UP000059680">
    <property type="component" value="Chromosome 7"/>
</dbReference>
<dbReference type="ExpressionAtlas" id="Q8H383">
    <property type="expression patterns" value="baseline and differential"/>
</dbReference>
<dbReference type="GO" id="GO:0005634">
    <property type="term" value="C:nucleus"/>
    <property type="evidence" value="ECO:0000318"/>
    <property type="project" value="GO_Central"/>
</dbReference>
<dbReference type="GO" id="GO:0042393">
    <property type="term" value="F:histone binding"/>
    <property type="evidence" value="ECO:0007669"/>
    <property type="project" value="InterPro"/>
</dbReference>
<dbReference type="GO" id="GO:0000976">
    <property type="term" value="F:transcription cis-regulatory region binding"/>
    <property type="evidence" value="ECO:0000318"/>
    <property type="project" value="GO_Central"/>
</dbReference>
<dbReference type="GO" id="GO:0003712">
    <property type="term" value="F:transcription coregulator activity"/>
    <property type="evidence" value="ECO:0000318"/>
    <property type="project" value="GO_Central"/>
</dbReference>
<dbReference type="GO" id="GO:0008270">
    <property type="term" value="F:zinc ion binding"/>
    <property type="evidence" value="ECO:0007669"/>
    <property type="project" value="UniProtKB-KW"/>
</dbReference>
<dbReference type="GO" id="GO:0006325">
    <property type="term" value="P:chromatin organization"/>
    <property type="evidence" value="ECO:0007669"/>
    <property type="project" value="UniProtKB-KW"/>
</dbReference>
<dbReference type="GO" id="GO:0006355">
    <property type="term" value="P:regulation of DNA-templated transcription"/>
    <property type="evidence" value="ECO:0007669"/>
    <property type="project" value="InterPro"/>
</dbReference>
<dbReference type="CDD" id="cd15613">
    <property type="entry name" value="PHD_AL_plant"/>
    <property type="match status" value="1"/>
</dbReference>
<dbReference type="FunFam" id="3.30.40.10:FF:000306">
    <property type="entry name" value="PHD finger alfin-like protein"/>
    <property type="match status" value="1"/>
</dbReference>
<dbReference type="Gene3D" id="3.30.40.10">
    <property type="entry name" value="Zinc/RING finger domain, C3HC4 (zinc finger)"/>
    <property type="match status" value="1"/>
</dbReference>
<dbReference type="InterPro" id="IPR045104">
    <property type="entry name" value="Alfin"/>
</dbReference>
<dbReference type="InterPro" id="IPR021998">
    <property type="entry name" value="Alfin_N"/>
</dbReference>
<dbReference type="InterPro" id="IPR044104">
    <property type="entry name" value="PHD_AL_plant"/>
</dbReference>
<dbReference type="InterPro" id="IPR019786">
    <property type="entry name" value="Zinc_finger_PHD-type_CS"/>
</dbReference>
<dbReference type="InterPro" id="IPR011011">
    <property type="entry name" value="Znf_FYVE_PHD"/>
</dbReference>
<dbReference type="InterPro" id="IPR001965">
    <property type="entry name" value="Znf_PHD"/>
</dbReference>
<dbReference type="InterPro" id="IPR019787">
    <property type="entry name" value="Znf_PHD-finger"/>
</dbReference>
<dbReference type="InterPro" id="IPR013083">
    <property type="entry name" value="Znf_RING/FYVE/PHD"/>
</dbReference>
<dbReference type="PANTHER" id="PTHR12321">
    <property type="entry name" value="CPG BINDING PROTEIN"/>
    <property type="match status" value="1"/>
</dbReference>
<dbReference type="PANTHER" id="PTHR12321:SF39">
    <property type="entry name" value="PHD FINGER PROTEIN ALFIN-LIKE 2"/>
    <property type="match status" value="1"/>
</dbReference>
<dbReference type="Pfam" id="PF12165">
    <property type="entry name" value="Alfin"/>
    <property type="match status" value="1"/>
</dbReference>
<dbReference type="Pfam" id="PF00628">
    <property type="entry name" value="PHD"/>
    <property type="match status" value="1"/>
</dbReference>
<dbReference type="SMART" id="SM00249">
    <property type="entry name" value="PHD"/>
    <property type="match status" value="1"/>
</dbReference>
<dbReference type="SUPFAM" id="SSF57903">
    <property type="entry name" value="FYVE/PHD zinc finger"/>
    <property type="match status" value="1"/>
</dbReference>
<dbReference type="PROSITE" id="PS01359">
    <property type="entry name" value="ZF_PHD_1"/>
    <property type="match status" value="1"/>
</dbReference>
<dbReference type="PROSITE" id="PS50016">
    <property type="entry name" value="ZF_PHD_2"/>
    <property type="match status" value="1"/>
</dbReference>
<organism>
    <name type="scientific">Oryza sativa subsp. japonica</name>
    <name type="common">Rice</name>
    <dbReference type="NCBI Taxonomy" id="39947"/>
    <lineage>
        <taxon>Eukaryota</taxon>
        <taxon>Viridiplantae</taxon>
        <taxon>Streptophyta</taxon>
        <taxon>Embryophyta</taxon>
        <taxon>Tracheophyta</taxon>
        <taxon>Spermatophyta</taxon>
        <taxon>Magnoliopsida</taxon>
        <taxon>Liliopsida</taxon>
        <taxon>Poales</taxon>
        <taxon>Poaceae</taxon>
        <taxon>BOP clade</taxon>
        <taxon>Oryzoideae</taxon>
        <taxon>Oryzeae</taxon>
        <taxon>Oryzinae</taxon>
        <taxon>Oryza</taxon>
        <taxon>Oryza sativa</taxon>
    </lineage>
</organism>
<keyword id="KW-0156">Chromatin regulator</keyword>
<keyword id="KW-0479">Metal-binding</keyword>
<keyword id="KW-0539">Nucleus</keyword>
<keyword id="KW-1185">Reference proteome</keyword>
<keyword id="KW-0804">Transcription</keyword>
<keyword id="KW-0805">Transcription regulation</keyword>
<keyword id="KW-0862">Zinc</keyword>
<keyword id="KW-0863">Zinc-finger</keyword>